<organism>
    <name type="scientific">Synechococcus sp. (strain WH7803)</name>
    <dbReference type="NCBI Taxonomy" id="32051"/>
    <lineage>
        <taxon>Bacteria</taxon>
        <taxon>Bacillati</taxon>
        <taxon>Cyanobacteriota</taxon>
        <taxon>Cyanophyceae</taxon>
        <taxon>Synechococcales</taxon>
        <taxon>Synechococcaceae</taxon>
        <taxon>Synechococcus</taxon>
    </lineage>
</organism>
<protein>
    <recommendedName>
        <fullName evidence="1">S-adenosylmethionine synthase</fullName>
        <shortName evidence="1">AdoMet synthase</shortName>
        <ecNumber evidence="1">2.5.1.6</ecNumber>
    </recommendedName>
    <alternativeName>
        <fullName evidence="1">MAT</fullName>
    </alternativeName>
    <alternativeName>
        <fullName evidence="1">Methionine adenosyltransferase</fullName>
    </alternativeName>
</protein>
<comment type="function">
    <text evidence="1">Catalyzes the formation of S-adenosylmethionine (AdoMet) from methionine and ATP. The overall synthetic reaction is composed of two sequential steps, AdoMet formation and the subsequent tripolyphosphate hydrolysis which occurs prior to release of AdoMet from the enzyme.</text>
</comment>
<comment type="catalytic activity">
    <reaction evidence="1">
        <text>L-methionine + ATP + H2O = S-adenosyl-L-methionine + phosphate + diphosphate</text>
        <dbReference type="Rhea" id="RHEA:21080"/>
        <dbReference type="ChEBI" id="CHEBI:15377"/>
        <dbReference type="ChEBI" id="CHEBI:30616"/>
        <dbReference type="ChEBI" id="CHEBI:33019"/>
        <dbReference type="ChEBI" id="CHEBI:43474"/>
        <dbReference type="ChEBI" id="CHEBI:57844"/>
        <dbReference type="ChEBI" id="CHEBI:59789"/>
        <dbReference type="EC" id="2.5.1.6"/>
    </reaction>
</comment>
<comment type="cofactor">
    <cofactor evidence="1">
        <name>Mg(2+)</name>
        <dbReference type="ChEBI" id="CHEBI:18420"/>
    </cofactor>
    <text evidence="1">Binds 2 divalent ions per subunit.</text>
</comment>
<comment type="cofactor">
    <cofactor evidence="1">
        <name>K(+)</name>
        <dbReference type="ChEBI" id="CHEBI:29103"/>
    </cofactor>
    <text evidence="1">Binds 1 potassium ion per subunit.</text>
</comment>
<comment type="pathway">
    <text evidence="1">Amino-acid biosynthesis; S-adenosyl-L-methionine biosynthesis; S-adenosyl-L-methionine from L-methionine: step 1/1.</text>
</comment>
<comment type="subunit">
    <text evidence="1">Homotetramer; dimer of dimers.</text>
</comment>
<comment type="subcellular location">
    <subcellularLocation>
        <location evidence="1">Cytoplasm</location>
    </subcellularLocation>
</comment>
<comment type="similarity">
    <text evidence="1">Belongs to the AdoMet synthase family.</text>
</comment>
<gene>
    <name evidence="1" type="primary">metK</name>
    <name type="ordered locus">SynWH7803_0513</name>
</gene>
<name>METK_SYNPW</name>
<sequence>MSRYVFTSESVTEGHPDKICDQVSDAVLDALLAQDSSSRVACETVVNTGLCMITGEVTSKAQVDFIHLVRDVIREIGYSGARAGGFDANSCAVLVALDQQSPDIAQGVDEADDHEGDPLDKVGAGDQGIMFGYACNETPELMPLPISLAHRLSRRLAEVRHNGTLDYLLPDGKTQVSVVYENDKPVAIDTILISTQHTAEVAGLSDEQQVRERISDDLWTHVVEPATADLPLKPSKDSTRYLVNPTGKFVVGGPQGDAGLTGRKIIVDTYGGYARHGGGAFSGKDPTKVDRSAAYAARYVAKCLVAAGLAQRAEVQLSYAIGVAKPVSILVESFGTGKVSNAELTELVQQHFDLRPGAIIQQFKLREMPALSGGRFYRDTAAYGHFGRPDLKLPWEDVENKASTLLQAEASRLQQGNTL</sequence>
<proteinExistence type="inferred from homology"/>
<reference key="1">
    <citation type="submission" date="2006-05" db="EMBL/GenBank/DDBJ databases">
        <authorList>
            <consortium name="Genoscope"/>
        </authorList>
    </citation>
    <scope>NUCLEOTIDE SEQUENCE [LARGE SCALE GENOMIC DNA]</scope>
    <source>
        <strain>WH7803</strain>
    </source>
</reference>
<evidence type="ECO:0000255" key="1">
    <source>
        <dbReference type="HAMAP-Rule" id="MF_00086"/>
    </source>
</evidence>
<accession>A5GJ24</accession>
<keyword id="KW-0067">ATP-binding</keyword>
<keyword id="KW-0963">Cytoplasm</keyword>
<keyword id="KW-0460">Magnesium</keyword>
<keyword id="KW-0479">Metal-binding</keyword>
<keyword id="KW-0547">Nucleotide-binding</keyword>
<keyword id="KW-0554">One-carbon metabolism</keyword>
<keyword id="KW-0630">Potassium</keyword>
<keyword id="KW-1185">Reference proteome</keyword>
<keyword id="KW-0808">Transferase</keyword>
<feature type="chain" id="PRO_0000302996" description="S-adenosylmethionine synthase">
    <location>
        <begin position="1"/>
        <end position="419"/>
    </location>
</feature>
<feature type="region of interest" description="Flexible loop" evidence="1">
    <location>
        <begin position="100"/>
        <end position="110"/>
    </location>
</feature>
<feature type="binding site" description="in other chain" evidence="1">
    <location>
        <position position="15"/>
    </location>
    <ligand>
        <name>ATP</name>
        <dbReference type="ChEBI" id="CHEBI:30616"/>
        <note>ligand shared between two neighboring subunits</note>
    </ligand>
</feature>
<feature type="binding site" evidence="1">
    <location>
        <position position="17"/>
    </location>
    <ligand>
        <name>Mg(2+)</name>
        <dbReference type="ChEBI" id="CHEBI:18420"/>
    </ligand>
</feature>
<feature type="binding site" evidence="1">
    <location>
        <position position="43"/>
    </location>
    <ligand>
        <name>K(+)</name>
        <dbReference type="ChEBI" id="CHEBI:29103"/>
    </ligand>
</feature>
<feature type="binding site" description="in other chain" evidence="1">
    <location>
        <position position="56"/>
    </location>
    <ligand>
        <name>L-methionine</name>
        <dbReference type="ChEBI" id="CHEBI:57844"/>
        <note>ligand shared between two neighboring subunits</note>
    </ligand>
</feature>
<feature type="binding site" description="in other chain" evidence="1">
    <location>
        <position position="100"/>
    </location>
    <ligand>
        <name>L-methionine</name>
        <dbReference type="ChEBI" id="CHEBI:57844"/>
        <note>ligand shared between two neighboring subunits</note>
    </ligand>
</feature>
<feature type="binding site" description="in other chain" evidence="1">
    <location>
        <begin position="171"/>
        <end position="173"/>
    </location>
    <ligand>
        <name>ATP</name>
        <dbReference type="ChEBI" id="CHEBI:30616"/>
        <note>ligand shared between two neighboring subunits</note>
    </ligand>
</feature>
<feature type="binding site" description="in other chain" evidence="1">
    <location>
        <begin position="248"/>
        <end position="249"/>
    </location>
    <ligand>
        <name>ATP</name>
        <dbReference type="ChEBI" id="CHEBI:30616"/>
        <note>ligand shared between two neighboring subunits</note>
    </ligand>
</feature>
<feature type="binding site" evidence="1">
    <location>
        <position position="257"/>
    </location>
    <ligand>
        <name>ATP</name>
        <dbReference type="ChEBI" id="CHEBI:30616"/>
        <note>ligand shared between two neighboring subunits</note>
    </ligand>
</feature>
<feature type="binding site" evidence="1">
    <location>
        <position position="257"/>
    </location>
    <ligand>
        <name>L-methionine</name>
        <dbReference type="ChEBI" id="CHEBI:57844"/>
        <note>ligand shared between two neighboring subunits</note>
    </ligand>
</feature>
<feature type="binding site" description="in other chain" evidence="1">
    <location>
        <begin position="263"/>
        <end position="264"/>
    </location>
    <ligand>
        <name>ATP</name>
        <dbReference type="ChEBI" id="CHEBI:30616"/>
        <note>ligand shared between two neighboring subunits</note>
    </ligand>
</feature>
<feature type="binding site" evidence="1">
    <location>
        <position position="280"/>
    </location>
    <ligand>
        <name>ATP</name>
        <dbReference type="ChEBI" id="CHEBI:30616"/>
        <note>ligand shared between two neighboring subunits</note>
    </ligand>
</feature>
<feature type="binding site" evidence="1">
    <location>
        <position position="284"/>
    </location>
    <ligand>
        <name>ATP</name>
        <dbReference type="ChEBI" id="CHEBI:30616"/>
        <note>ligand shared between two neighboring subunits</note>
    </ligand>
</feature>
<feature type="binding site" description="in other chain" evidence="1">
    <location>
        <position position="288"/>
    </location>
    <ligand>
        <name>L-methionine</name>
        <dbReference type="ChEBI" id="CHEBI:57844"/>
        <note>ligand shared between two neighboring subunits</note>
    </ligand>
</feature>
<dbReference type="EC" id="2.5.1.6" evidence="1"/>
<dbReference type="EMBL" id="CT971583">
    <property type="protein sequence ID" value="CAK22939.1"/>
    <property type="molecule type" value="Genomic_DNA"/>
</dbReference>
<dbReference type="SMR" id="A5GJ24"/>
<dbReference type="STRING" id="32051.SynWH7803_0513"/>
<dbReference type="KEGG" id="syx:SynWH7803_0513"/>
<dbReference type="eggNOG" id="COG0192">
    <property type="taxonomic scope" value="Bacteria"/>
</dbReference>
<dbReference type="HOGENOM" id="CLU_041802_1_1_3"/>
<dbReference type="OrthoDB" id="9801686at2"/>
<dbReference type="UniPathway" id="UPA00315">
    <property type="reaction ID" value="UER00080"/>
</dbReference>
<dbReference type="Proteomes" id="UP000001566">
    <property type="component" value="Chromosome"/>
</dbReference>
<dbReference type="GO" id="GO:0005737">
    <property type="term" value="C:cytoplasm"/>
    <property type="evidence" value="ECO:0007669"/>
    <property type="project" value="UniProtKB-SubCell"/>
</dbReference>
<dbReference type="GO" id="GO:0005524">
    <property type="term" value="F:ATP binding"/>
    <property type="evidence" value="ECO:0007669"/>
    <property type="project" value="UniProtKB-UniRule"/>
</dbReference>
<dbReference type="GO" id="GO:0000287">
    <property type="term" value="F:magnesium ion binding"/>
    <property type="evidence" value="ECO:0007669"/>
    <property type="project" value="UniProtKB-UniRule"/>
</dbReference>
<dbReference type="GO" id="GO:0004478">
    <property type="term" value="F:methionine adenosyltransferase activity"/>
    <property type="evidence" value="ECO:0007669"/>
    <property type="project" value="UniProtKB-UniRule"/>
</dbReference>
<dbReference type="GO" id="GO:0006730">
    <property type="term" value="P:one-carbon metabolic process"/>
    <property type="evidence" value="ECO:0007669"/>
    <property type="project" value="UniProtKB-KW"/>
</dbReference>
<dbReference type="GO" id="GO:0006556">
    <property type="term" value="P:S-adenosylmethionine biosynthetic process"/>
    <property type="evidence" value="ECO:0007669"/>
    <property type="project" value="UniProtKB-UniRule"/>
</dbReference>
<dbReference type="CDD" id="cd18079">
    <property type="entry name" value="S-AdoMet_synt"/>
    <property type="match status" value="1"/>
</dbReference>
<dbReference type="FunFam" id="3.30.300.10:FF:000003">
    <property type="entry name" value="S-adenosylmethionine synthase"/>
    <property type="match status" value="1"/>
</dbReference>
<dbReference type="Gene3D" id="3.30.300.10">
    <property type="match status" value="3"/>
</dbReference>
<dbReference type="HAMAP" id="MF_00086">
    <property type="entry name" value="S_AdoMet_synth1"/>
    <property type="match status" value="1"/>
</dbReference>
<dbReference type="InterPro" id="IPR022631">
    <property type="entry name" value="ADOMET_SYNTHASE_CS"/>
</dbReference>
<dbReference type="InterPro" id="IPR022630">
    <property type="entry name" value="S-AdoMet_synt_C"/>
</dbReference>
<dbReference type="InterPro" id="IPR022629">
    <property type="entry name" value="S-AdoMet_synt_central"/>
</dbReference>
<dbReference type="InterPro" id="IPR022628">
    <property type="entry name" value="S-AdoMet_synt_N"/>
</dbReference>
<dbReference type="InterPro" id="IPR002133">
    <property type="entry name" value="S-AdoMet_synthetase"/>
</dbReference>
<dbReference type="InterPro" id="IPR022636">
    <property type="entry name" value="S-AdoMet_synthetase_sfam"/>
</dbReference>
<dbReference type="NCBIfam" id="TIGR01034">
    <property type="entry name" value="metK"/>
    <property type="match status" value="1"/>
</dbReference>
<dbReference type="PANTHER" id="PTHR11964">
    <property type="entry name" value="S-ADENOSYLMETHIONINE SYNTHETASE"/>
    <property type="match status" value="1"/>
</dbReference>
<dbReference type="Pfam" id="PF02773">
    <property type="entry name" value="S-AdoMet_synt_C"/>
    <property type="match status" value="1"/>
</dbReference>
<dbReference type="Pfam" id="PF02772">
    <property type="entry name" value="S-AdoMet_synt_M"/>
    <property type="match status" value="1"/>
</dbReference>
<dbReference type="Pfam" id="PF00438">
    <property type="entry name" value="S-AdoMet_synt_N"/>
    <property type="match status" value="1"/>
</dbReference>
<dbReference type="PIRSF" id="PIRSF000497">
    <property type="entry name" value="MAT"/>
    <property type="match status" value="1"/>
</dbReference>
<dbReference type="SUPFAM" id="SSF55973">
    <property type="entry name" value="S-adenosylmethionine synthetase"/>
    <property type="match status" value="3"/>
</dbReference>
<dbReference type="PROSITE" id="PS00376">
    <property type="entry name" value="ADOMET_SYNTHASE_1"/>
    <property type="match status" value="1"/>
</dbReference>
<dbReference type="PROSITE" id="PS00377">
    <property type="entry name" value="ADOMET_SYNTHASE_2"/>
    <property type="match status" value="1"/>
</dbReference>